<accession>Q9KXN1</accession>
<accession>B5MG06</accession>
<sequence>MSADTLQIAYSPCPNDTFVFDALAHGRVPGAPALDVTFADIDITNGMAERGELDVLKVSYAVLPYVLDDWALLPCGGALGRGCGPLVLTREADADLRGRTVAVPSETSTAYLLFRLWAADTVPGGVGEIVVMPFHEIMPAVRDGKVDAGLVIHEARFTYQNYGLHKLADMGEHWEHTTGLPIPLGAIIARRSLGAPALTRLADAVRASVRAAWDDPEASRPYVMEHAQEMDPAVADQHIGLYVNEFTADLGEDGYAAIRGLLTRAAAEGLVPALGPDALAFP</sequence>
<feature type="chain" id="PRO_0000425127" description="1,4-dihydroxy-6-naphtoate synthase">
    <location>
        <begin position="1"/>
        <end position="282"/>
    </location>
</feature>
<feature type="active site" description="Proton acceptor" evidence="1">
    <location>
        <position position="153"/>
    </location>
</feature>
<feature type="binding site" evidence="1">
    <location>
        <begin position="57"/>
        <end position="59"/>
    </location>
    <ligand>
        <name>substrate</name>
    </ligand>
</feature>
<feature type="binding site" evidence="1">
    <location>
        <begin position="109"/>
        <end position="110"/>
    </location>
    <ligand>
        <name>substrate</name>
    </ligand>
</feature>
<reference key="1">
    <citation type="journal article" date="2008" name="Science">
        <title>An alternative menaquinone biosynthetic pathway operating in microorganisms.</title>
        <authorList>
            <person name="Hiratsuka T."/>
            <person name="Furihata K."/>
            <person name="Ishikawa J."/>
            <person name="Yamashita H."/>
            <person name="Itoh N."/>
            <person name="Seto H."/>
            <person name="Dairi T."/>
        </authorList>
    </citation>
    <scope>NUCLEOTIDE SEQUENCE [GENOMIC DNA]</scope>
    <scope>FUNCTION</scope>
    <scope>ROLE IN MENAQUINONE BIOSYNTHESIS</scope>
    <scope>DISRUPTION PHENOTYPE</scope>
    <scope>PATHWAY</scope>
    <source>
        <strain>ATCC BAA-471 / A3(2) / M145</strain>
    </source>
</reference>
<reference key="2">
    <citation type="journal article" date="2002" name="Nature">
        <title>Complete genome sequence of the model actinomycete Streptomyces coelicolor A3(2).</title>
        <authorList>
            <person name="Bentley S.D."/>
            <person name="Chater K.F."/>
            <person name="Cerdeno-Tarraga A.-M."/>
            <person name="Challis G.L."/>
            <person name="Thomson N.R."/>
            <person name="James K.D."/>
            <person name="Harris D.E."/>
            <person name="Quail M.A."/>
            <person name="Kieser H."/>
            <person name="Harper D."/>
            <person name="Bateman A."/>
            <person name="Brown S."/>
            <person name="Chandra G."/>
            <person name="Chen C.W."/>
            <person name="Collins M."/>
            <person name="Cronin A."/>
            <person name="Fraser A."/>
            <person name="Goble A."/>
            <person name="Hidalgo J."/>
            <person name="Hornsby T."/>
            <person name="Howarth S."/>
            <person name="Huang C.-H."/>
            <person name="Kieser T."/>
            <person name="Larke L."/>
            <person name="Murphy L.D."/>
            <person name="Oliver K."/>
            <person name="O'Neil S."/>
            <person name="Rabbinowitsch E."/>
            <person name="Rajandream M.A."/>
            <person name="Rutherford K.M."/>
            <person name="Rutter S."/>
            <person name="Seeger K."/>
            <person name="Saunders D."/>
            <person name="Sharp S."/>
            <person name="Squares R."/>
            <person name="Squares S."/>
            <person name="Taylor K."/>
            <person name="Warren T."/>
            <person name="Wietzorrek A."/>
            <person name="Woodward J.R."/>
            <person name="Barrell B.G."/>
            <person name="Parkhill J."/>
            <person name="Hopwood D.A."/>
        </authorList>
    </citation>
    <scope>NUCLEOTIDE SEQUENCE [LARGE SCALE GENOMIC DNA]</scope>
    <source>
        <strain>ATCC BAA-471 / A3(2) / M145</strain>
    </source>
</reference>
<comment type="function">
    <text evidence="3">Catalyzes the conversion of cyclic dehypoxanthine futalosine (cyclic DHFL) into 1,4-dihydroxy-6-naphthoate, a step in the biosynthesis of menaquinone (MK, vitamin K2).</text>
</comment>
<comment type="catalytic activity">
    <reaction evidence="1">
        <text>cyclic dehypoxanthinylfutalosinate = 1,4-dihydroxy-6-naphthoate + dihydroxyacetone</text>
        <dbReference type="Rhea" id="RHEA:33087"/>
        <dbReference type="ChEBI" id="CHEBI:16016"/>
        <dbReference type="ChEBI" id="CHEBI:64254"/>
        <dbReference type="ChEBI" id="CHEBI:64270"/>
        <dbReference type="EC" id="4.1.99.29"/>
    </reaction>
</comment>
<comment type="pathway">
    <text evidence="1 2">Quinol/quinone metabolism; menaquinone biosynthesis.</text>
</comment>
<comment type="disruption phenotype">
    <text evidence="2">Cells lacking this gene require menaquinone-4 (MK 4) for their growth, and accumulate cyclic DHFL.</text>
</comment>
<comment type="similarity">
    <text evidence="1">Belongs to the MqnA/MqnD family. MqnD subfamily.</text>
</comment>
<dbReference type="EC" id="4.1.99.29" evidence="1"/>
<dbReference type="EMBL" id="AB447891">
    <property type="protein sequence ID" value="BAG71677.1"/>
    <property type="molecule type" value="Genomic_DNA"/>
</dbReference>
<dbReference type="EMBL" id="AL939119">
    <property type="protein sequence ID" value="CAB93400.1"/>
    <property type="molecule type" value="Genomic_DNA"/>
</dbReference>
<dbReference type="RefSeq" id="NP_628497.1">
    <property type="nucleotide sequence ID" value="NC_003888.3"/>
</dbReference>
<dbReference type="RefSeq" id="WP_003974649.1">
    <property type="nucleotide sequence ID" value="NZ_VNID01000026.1"/>
</dbReference>
<dbReference type="SMR" id="Q9KXN1"/>
<dbReference type="STRING" id="100226.gene:17761971"/>
<dbReference type="PaxDb" id="100226-SCO4326"/>
<dbReference type="KEGG" id="sco:SCO4326"/>
<dbReference type="PATRIC" id="fig|100226.15.peg.4395"/>
<dbReference type="eggNOG" id="COG2107">
    <property type="taxonomic scope" value="Bacteria"/>
</dbReference>
<dbReference type="HOGENOM" id="CLU_070326_0_0_11"/>
<dbReference type="InParanoid" id="Q9KXN1"/>
<dbReference type="OrthoDB" id="9809439at2"/>
<dbReference type="PhylomeDB" id="Q9KXN1"/>
<dbReference type="BioCyc" id="MetaCyc:MONOMER-14867"/>
<dbReference type="UniPathway" id="UPA00079"/>
<dbReference type="Proteomes" id="UP000001973">
    <property type="component" value="Chromosome"/>
</dbReference>
<dbReference type="GO" id="GO:0016830">
    <property type="term" value="F:carbon-carbon lyase activity"/>
    <property type="evidence" value="ECO:0007669"/>
    <property type="project" value="UniProtKB-UniRule"/>
</dbReference>
<dbReference type="GO" id="GO:0009234">
    <property type="term" value="P:menaquinone biosynthetic process"/>
    <property type="evidence" value="ECO:0007669"/>
    <property type="project" value="UniProtKB-UniRule"/>
</dbReference>
<dbReference type="CDD" id="cd13635">
    <property type="entry name" value="PBP2_Ttha1568_Mqnd"/>
    <property type="match status" value="1"/>
</dbReference>
<dbReference type="Gene3D" id="3.40.190.10">
    <property type="entry name" value="Periplasmic binding protein-like II"/>
    <property type="match status" value="2"/>
</dbReference>
<dbReference type="HAMAP" id="MF_00996">
    <property type="entry name" value="MqnD"/>
    <property type="match status" value="1"/>
</dbReference>
<dbReference type="InterPro" id="IPR003773">
    <property type="entry name" value="Menaquinone_biosynth"/>
</dbReference>
<dbReference type="InterPro" id="IPR030869">
    <property type="entry name" value="MqnD"/>
</dbReference>
<dbReference type="PANTHER" id="PTHR37167">
    <property type="entry name" value="1,4-DIHYDROXY-6-NAPHTOATE SYNTHASE"/>
    <property type="match status" value="1"/>
</dbReference>
<dbReference type="PANTHER" id="PTHR37167:SF1">
    <property type="entry name" value="1,4-DIHYDROXY-6-NAPHTOATE SYNTHASE"/>
    <property type="match status" value="1"/>
</dbReference>
<dbReference type="Pfam" id="PF02621">
    <property type="entry name" value="VitK2_biosynth"/>
    <property type="match status" value="1"/>
</dbReference>
<dbReference type="SUPFAM" id="SSF53850">
    <property type="entry name" value="Periplasmic binding protein-like II"/>
    <property type="match status" value="1"/>
</dbReference>
<evidence type="ECO:0000255" key="1">
    <source>
        <dbReference type="HAMAP-Rule" id="MF_00996"/>
    </source>
</evidence>
<evidence type="ECO:0000269" key="2">
    <source>
    </source>
</evidence>
<evidence type="ECO:0000305" key="3">
    <source>
    </source>
</evidence>
<name>MQND_STRCO</name>
<gene>
    <name evidence="1" type="primary">mqnD</name>
    <name type="ordered locus">SCO4326</name>
</gene>
<organism>
    <name type="scientific">Streptomyces coelicolor (strain ATCC BAA-471 / A3(2) / M145)</name>
    <dbReference type="NCBI Taxonomy" id="100226"/>
    <lineage>
        <taxon>Bacteria</taxon>
        <taxon>Bacillati</taxon>
        <taxon>Actinomycetota</taxon>
        <taxon>Actinomycetes</taxon>
        <taxon>Kitasatosporales</taxon>
        <taxon>Streptomycetaceae</taxon>
        <taxon>Streptomyces</taxon>
        <taxon>Streptomyces albidoflavus group</taxon>
    </lineage>
</organism>
<proteinExistence type="inferred from homology"/>
<keyword id="KW-0456">Lyase</keyword>
<keyword id="KW-0474">Menaquinone biosynthesis</keyword>
<keyword id="KW-1185">Reference proteome</keyword>
<protein>
    <recommendedName>
        <fullName evidence="1">1,4-dihydroxy-6-naphtoate synthase</fullName>
        <ecNumber evidence="1">4.1.99.29</ecNumber>
    </recommendedName>
    <alternativeName>
        <fullName evidence="1">Menaquinone biosynthetic enzyme MqnD</fullName>
    </alternativeName>
</protein>